<name>RS13_CARRP</name>
<evidence type="ECO:0000255" key="1">
    <source>
        <dbReference type="HAMAP-Rule" id="MF_01315"/>
    </source>
</evidence>
<evidence type="ECO:0000305" key="2"/>
<protein>
    <recommendedName>
        <fullName evidence="1">Small ribosomal subunit protein uS13</fullName>
    </recommendedName>
    <alternativeName>
        <fullName evidence="2">30S ribosomal protein S13</fullName>
    </alternativeName>
</protein>
<comment type="function">
    <text evidence="1">Located at the top of the head of the 30S subunit, it contacts several helices of the 16S rRNA. In the 70S ribosome it contacts the 23S rRNA (bridge B1a) and protein L5 of the 50S subunit (bridge B1b), connecting the 2 subunits; these bridges are implicated in subunit movement. Contacts the tRNAs in the A and P-sites.</text>
</comment>
<comment type="subunit">
    <text evidence="1">Part of the 30S ribosomal subunit. Forms a loose heterodimer with protein S19. Forms two bridges to the 50S subunit in the 70S ribosome.</text>
</comment>
<comment type="similarity">
    <text evidence="1">Belongs to the universal ribosomal protein uS13 family.</text>
</comment>
<feature type="chain" id="PRO_0000306583" description="Small ribosomal subunit protein uS13">
    <location>
        <begin position="1"/>
        <end position="118"/>
    </location>
</feature>
<accession>Q05FK2</accession>
<gene>
    <name evidence="1" type="primary">rpsM</name>
    <name type="ordered locus">CRP_138</name>
</gene>
<proteinExistence type="inferred from homology"/>
<keyword id="KW-0687">Ribonucleoprotein</keyword>
<keyword id="KW-0689">Ribosomal protein</keyword>
<keyword id="KW-0694">RNA-binding</keyword>
<keyword id="KW-0699">rRNA-binding</keyword>
<keyword id="KW-0820">tRNA-binding</keyword>
<dbReference type="EMBL" id="AP009180">
    <property type="protein sequence ID" value="BAF35169.1"/>
    <property type="molecule type" value="Genomic_DNA"/>
</dbReference>
<dbReference type="RefSeq" id="WP_011672361.1">
    <property type="nucleotide sequence ID" value="NC_008512.1"/>
</dbReference>
<dbReference type="SMR" id="Q05FK2"/>
<dbReference type="STRING" id="387662.CRP_138"/>
<dbReference type="KEGG" id="crp:CRP_138"/>
<dbReference type="HOGENOM" id="CLU_103849_1_2_6"/>
<dbReference type="OrthoDB" id="9803610at2"/>
<dbReference type="Proteomes" id="UP000000777">
    <property type="component" value="Chromosome"/>
</dbReference>
<dbReference type="GO" id="GO:0005829">
    <property type="term" value="C:cytosol"/>
    <property type="evidence" value="ECO:0007669"/>
    <property type="project" value="TreeGrafter"/>
</dbReference>
<dbReference type="GO" id="GO:0015935">
    <property type="term" value="C:small ribosomal subunit"/>
    <property type="evidence" value="ECO:0007669"/>
    <property type="project" value="TreeGrafter"/>
</dbReference>
<dbReference type="GO" id="GO:0019843">
    <property type="term" value="F:rRNA binding"/>
    <property type="evidence" value="ECO:0007669"/>
    <property type="project" value="UniProtKB-UniRule"/>
</dbReference>
<dbReference type="GO" id="GO:0003735">
    <property type="term" value="F:structural constituent of ribosome"/>
    <property type="evidence" value="ECO:0007669"/>
    <property type="project" value="InterPro"/>
</dbReference>
<dbReference type="GO" id="GO:0000049">
    <property type="term" value="F:tRNA binding"/>
    <property type="evidence" value="ECO:0007669"/>
    <property type="project" value="UniProtKB-UniRule"/>
</dbReference>
<dbReference type="GO" id="GO:0006412">
    <property type="term" value="P:translation"/>
    <property type="evidence" value="ECO:0007669"/>
    <property type="project" value="UniProtKB-UniRule"/>
</dbReference>
<dbReference type="Gene3D" id="1.10.8.50">
    <property type="match status" value="1"/>
</dbReference>
<dbReference type="Gene3D" id="4.10.910.10">
    <property type="entry name" value="30s ribosomal protein s13, domain 2"/>
    <property type="match status" value="1"/>
</dbReference>
<dbReference type="HAMAP" id="MF_01315">
    <property type="entry name" value="Ribosomal_uS13"/>
    <property type="match status" value="1"/>
</dbReference>
<dbReference type="InterPro" id="IPR027437">
    <property type="entry name" value="Rbsml_uS13_C"/>
</dbReference>
<dbReference type="InterPro" id="IPR001892">
    <property type="entry name" value="Ribosomal_uS13"/>
</dbReference>
<dbReference type="InterPro" id="IPR010979">
    <property type="entry name" value="Ribosomal_uS13-like_H2TH"/>
</dbReference>
<dbReference type="InterPro" id="IPR018269">
    <property type="entry name" value="Ribosomal_uS13_CS"/>
</dbReference>
<dbReference type="PANTHER" id="PTHR10871">
    <property type="entry name" value="30S RIBOSOMAL PROTEIN S13/40S RIBOSOMAL PROTEIN S18"/>
    <property type="match status" value="1"/>
</dbReference>
<dbReference type="PANTHER" id="PTHR10871:SF1">
    <property type="entry name" value="SMALL RIBOSOMAL SUBUNIT PROTEIN US13M"/>
    <property type="match status" value="1"/>
</dbReference>
<dbReference type="Pfam" id="PF00416">
    <property type="entry name" value="Ribosomal_S13"/>
    <property type="match status" value="2"/>
</dbReference>
<dbReference type="PIRSF" id="PIRSF002134">
    <property type="entry name" value="Ribosomal_S13"/>
    <property type="match status" value="1"/>
</dbReference>
<dbReference type="SUPFAM" id="SSF46946">
    <property type="entry name" value="S13-like H2TH domain"/>
    <property type="match status" value="1"/>
</dbReference>
<dbReference type="PROSITE" id="PS00646">
    <property type="entry name" value="RIBOSOMAL_S13_1"/>
    <property type="match status" value="1"/>
</dbReference>
<dbReference type="PROSITE" id="PS50159">
    <property type="entry name" value="RIBOSOMAL_S13_2"/>
    <property type="match status" value="1"/>
</dbReference>
<reference key="1">
    <citation type="journal article" date="2006" name="Science">
        <title>The 160-kilobase genome of the bacterial endosymbiont Carsonella.</title>
        <authorList>
            <person name="Nakabachi A."/>
            <person name="Yamashita A."/>
            <person name="Toh H."/>
            <person name="Ishikawa H."/>
            <person name="Dunbar H.E."/>
            <person name="Moran N.A."/>
            <person name="Hattori M."/>
        </authorList>
    </citation>
    <scope>NUCLEOTIDE SEQUENCE [LARGE SCALE GENOMIC DNA]</scope>
    <source>
        <strain>PV</strain>
    </source>
</reference>
<organism>
    <name type="scientific">Carsonella ruddii (strain PV)</name>
    <dbReference type="NCBI Taxonomy" id="387662"/>
    <lineage>
        <taxon>Bacteria</taxon>
        <taxon>Pseudomonadati</taxon>
        <taxon>Pseudomonadota</taxon>
        <taxon>Gammaproteobacteria</taxon>
        <taxon>Oceanospirillales</taxon>
        <taxon>Halomonadaceae</taxon>
        <taxon>Zymobacter group</taxon>
        <taxon>Candidatus Carsonella</taxon>
    </lineage>
</organism>
<sequence>MNINICGVLISKKKNIVFGLTKIYGIGYSMSLKICSKIENFKNKKFKDLTNEEKAKIENFINKINVENNLKTIIKENFKKKLNLNSYKSLRHKKKLPCRGQRTKTNAKTRKKMNHEII</sequence>